<gene>
    <name evidence="13" type="primary">EMSY</name>
    <name type="synonym">C11orf30</name>
    <name type="ORF">GL002</name>
</gene>
<dbReference type="EMBL" id="AJ430203">
    <property type="protein sequence ID" value="CAD22881.1"/>
    <property type="molecule type" value="mRNA"/>
</dbReference>
<dbReference type="EMBL" id="AP002360">
    <property type="status" value="NOT_ANNOTATED_CDS"/>
    <property type="molecule type" value="Genomic_DNA"/>
</dbReference>
<dbReference type="EMBL" id="AP003165">
    <property type="status" value="NOT_ANNOTATED_CDS"/>
    <property type="molecule type" value="Genomic_DNA"/>
</dbReference>
<dbReference type="EMBL" id="CH471076">
    <property type="protein sequence ID" value="EAW74998.1"/>
    <property type="molecule type" value="Genomic_DNA"/>
</dbReference>
<dbReference type="EMBL" id="BC029375">
    <property type="protein sequence ID" value="AAH29375.1"/>
    <property type="status" value="ALT_INIT"/>
    <property type="molecule type" value="mRNA"/>
</dbReference>
<dbReference type="EMBL" id="BC033404">
    <property type="protein sequence ID" value="AAH33404.1"/>
    <property type="molecule type" value="mRNA"/>
</dbReference>
<dbReference type="EMBL" id="BC117265">
    <property type="protein sequence ID" value="AAI17266.1"/>
    <property type="molecule type" value="mRNA"/>
</dbReference>
<dbReference type="EMBL" id="BC143370">
    <property type="protein sequence ID" value="AAI43371.1"/>
    <property type="molecule type" value="mRNA"/>
</dbReference>
<dbReference type="EMBL" id="BC143374">
    <property type="protein sequence ID" value="AAI43375.1"/>
    <property type="molecule type" value="mRNA"/>
</dbReference>
<dbReference type="EMBL" id="BC143376">
    <property type="protein sequence ID" value="AAI43377.1"/>
    <property type="molecule type" value="mRNA"/>
</dbReference>
<dbReference type="EMBL" id="AK023651">
    <property type="protein sequence ID" value="BAB14627.1"/>
    <property type="status" value="ALT_INIT"/>
    <property type="molecule type" value="mRNA"/>
</dbReference>
<dbReference type="EMBL" id="AY070433">
    <property type="protein sequence ID" value="AAL65260.1"/>
    <property type="status" value="ALT_INIT"/>
    <property type="molecule type" value="mRNA"/>
</dbReference>
<dbReference type="EMBL" id="AF226047">
    <property type="protein sequence ID" value="AAF86947.1"/>
    <property type="status" value="ALT_INIT"/>
    <property type="molecule type" value="mRNA"/>
</dbReference>
<dbReference type="CCDS" id="CCDS73349.1">
    <molecule id="Q7Z589-7"/>
</dbReference>
<dbReference type="CCDS" id="CCDS73350.1">
    <molecule id="Q7Z589-4"/>
</dbReference>
<dbReference type="CCDS" id="CCDS73351.1">
    <molecule id="Q7Z589-5"/>
</dbReference>
<dbReference type="CCDS" id="CCDS8244.1">
    <molecule id="Q7Z589-1"/>
</dbReference>
<dbReference type="RefSeq" id="NP_001287871.1">
    <molecule id="Q7Z589-7"/>
    <property type="nucleotide sequence ID" value="NM_001300942.2"/>
</dbReference>
<dbReference type="RefSeq" id="NP_001287872.1">
    <molecule id="Q7Z589-5"/>
    <property type="nucleotide sequence ID" value="NM_001300943.2"/>
</dbReference>
<dbReference type="RefSeq" id="NP_001287873.1">
    <molecule id="Q7Z589-4"/>
    <property type="nucleotide sequence ID" value="NM_001300944.2"/>
</dbReference>
<dbReference type="RefSeq" id="NP_064578.2">
    <molecule id="Q7Z589-1"/>
    <property type="nucleotide sequence ID" value="NM_020193.4"/>
</dbReference>
<dbReference type="RefSeq" id="XP_047283257.1">
    <molecule id="Q7Z589-2"/>
    <property type="nucleotide sequence ID" value="XM_047427301.1"/>
</dbReference>
<dbReference type="RefSeq" id="XP_054225399.1">
    <molecule id="Q7Z589-2"/>
    <property type="nucleotide sequence ID" value="XM_054369424.1"/>
</dbReference>
<dbReference type="PDB" id="1UTU">
    <property type="method" value="X-ray"/>
    <property type="resolution" value="2.00 A"/>
    <property type="chains" value="A/B=1-108"/>
</dbReference>
<dbReference type="PDB" id="1UZ3">
    <property type="method" value="X-ray"/>
    <property type="resolution" value="1.10 A"/>
    <property type="chains" value="A/B=1-100"/>
</dbReference>
<dbReference type="PDB" id="2FMM">
    <property type="method" value="X-ray"/>
    <property type="resolution" value="1.80 A"/>
    <property type="chains" value="E=9-139"/>
</dbReference>
<dbReference type="PDBsum" id="1UTU"/>
<dbReference type="PDBsum" id="1UZ3"/>
<dbReference type="PDBsum" id="2FMM"/>
<dbReference type="SMR" id="Q7Z589"/>
<dbReference type="BioGRID" id="121270">
    <property type="interactions" value="147"/>
</dbReference>
<dbReference type="CORUM" id="Q7Z589"/>
<dbReference type="DIP" id="DIP-29099N"/>
<dbReference type="FunCoup" id="Q7Z589">
    <property type="interactions" value="2726"/>
</dbReference>
<dbReference type="IntAct" id="Q7Z589">
    <property type="interactions" value="99"/>
</dbReference>
<dbReference type="MINT" id="Q7Z589"/>
<dbReference type="STRING" id="9606.ENSP00000433205"/>
<dbReference type="GlyConnect" id="1657">
    <property type="glycosylation" value="2 N-Linked glycans (1 site), 1 O-GlcNAc glycan (9 sites)"/>
</dbReference>
<dbReference type="GlyCosmos" id="Q7Z589">
    <property type="glycosylation" value="55 sites, 4 glycans"/>
</dbReference>
<dbReference type="GlyGen" id="Q7Z589">
    <property type="glycosylation" value="75 sites, 3 N-linked glycans (2 sites), 2 O-linked glycans (70 sites)"/>
</dbReference>
<dbReference type="iPTMnet" id="Q7Z589"/>
<dbReference type="PhosphoSitePlus" id="Q7Z589"/>
<dbReference type="BioMuta" id="EMSY"/>
<dbReference type="DMDM" id="47605660"/>
<dbReference type="jPOST" id="Q7Z589"/>
<dbReference type="MassIVE" id="Q7Z589"/>
<dbReference type="PaxDb" id="9606-ENSP00000433205"/>
<dbReference type="PeptideAtlas" id="Q7Z589"/>
<dbReference type="ProteomicsDB" id="61157"/>
<dbReference type="ProteomicsDB" id="7194"/>
<dbReference type="ProteomicsDB" id="7195"/>
<dbReference type="ProteomicsDB" id="7196"/>
<dbReference type="Pumba" id="Q7Z589"/>
<dbReference type="Antibodypedia" id="31192">
    <property type="antibodies" value="185 antibodies from 27 providers"/>
</dbReference>
<dbReference type="DNASU" id="56946"/>
<dbReference type="Ensembl" id="ENST00000334736.7">
    <molecule id="Q7Z589-1"/>
    <property type="protein sequence ID" value="ENSP00000334130.3"/>
    <property type="gene ID" value="ENSG00000158636.17"/>
</dbReference>
<dbReference type="Ensembl" id="ENST00000524767.5">
    <molecule id="Q7Z589-7"/>
    <property type="protein sequence ID" value="ENSP00000433205.1"/>
    <property type="gene ID" value="ENSG00000158636.17"/>
</dbReference>
<dbReference type="Ensembl" id="ENST00000525038.5">
    <molecule id="Q7Z589-4"/>
    <property type="protein sequence ID" value="ENSP00000436968.1"/>
    <property type="gene ID" value="ENSG00000158636.17"/>
</dbReference>
<dbReference type="Ensembl" id="ENST00000525919.5">
    <molecule id="Q7Z589-5"/>
    <property type="protein sequence ID" value="ENSP00000432010.1"/>
    <property type="gene ID" value="ENSG00000158636.17"/>
</dbReference>
<dbReference type="Ensembl" id="ENST00000529032.5">
    <molecule id="Q7Z589-1"/>
    <property type="protein sequence ID" value="ENSP00000432327.1"/>
    <property type="gene ID" value="ENSG00000158636.17"/>
</dbReference>
<dbReference type="Ensembl" id="ENST00000533248.5">
    <molecule id="Q7Z589-6"/>
    <property type="protein sequence ID" value="ENSP00000433634.1"/>
    <property type="gene ID" value="ENSG00000158636.17"/>
</dbReference>
<dbReference type="Ensembl" id="ENST00000533988.5">
    <molecule id="Q7Z589-3"/>
    <property type="protein sequence ID" value="ENSP00000434665.1"/>
    <property type="gene ID" value="ENSG00000158636.17"/>
</dbReference>
<dbReference type="Ensembl" id="ENST00000695367.1">
    <molecule id="Q7Z589-7"/>
    <property type="protein sequence ID" value="ENSP00000511840.1"/>
    <property type="gene ID" value="ENSG00000158636.17"/>
</dbReference>
<dbReference type="GeneID" id="56946"/>
<dbReference type="KEGG" id="hsa:56946"/>
<dbReference type="MANE-Select" id="ENST00000695367.1">
    <molecule id="Q7Z589-7"/>
    <property type="protein sequence ID" value="ENSP00000511840.1"/>
    <property type="RefSeq nucleotide sequence ID" value="NM_001300942.2"/>
    <property type="RefSeq protein sequence ID" value="NP_001287871.1"/>
</dbReference>
<dbReference type="UCSC" id="uc001oxj.4">
    <molecule id="Q7Z589-1"/>
    <property type="organism name" value="human"/>
</dbReference>
<dbReference type="AGR" id="HGNC:18071"/>
<dbReference type="CTD" id="56946"/>
<dbReference type="DisGeNET" id="56946"/>
<dbReference type="GeneCards" id="EMSY"/>
<dbReference type="HGNC" id="HGNC:18071">
    <property type="gene designation" value="EMSY"/>
</dbReference>
<dbReference type="HPA" id="ENSG00000158636">
    <property type="expression patterns" value="Low tissue specificity"/>
</dbReference>
<dbReference type="MalaCards" id="EMSY"/>
<dbReference type="MIM" id="608574">
    <property type="type" value="gene"/>
</dbReference>
<dbReference type="neXtProt" id="NX_Q7Z589"/>
<dbReference type="OpenTargets" id="ENSG00000158636"/>
<dbReference type="PharmGKB" id="PA134904392"/>
<dbReference type="VEuPathDB" id="HostDB:ENSG00000158636"/>
<dbReference type="eggNOG" id="KOG4675">
    <property type="taxonomic scope" value="Eukaryota"/>
</dbReference>
<dbReference type="GeneTree" id="ENSGT00390000009554"/>
<dbReference type="HOGENOM" id="CLU_197021_0_0_1"/>
<dbReference type="InParanoid" id="Q7Z589"/>
<dbReference type="OMA" id="NTTTQKX"/>
<dbReference type="OrthoDB" id="10035579at2759"/>
<dbReference type="PAN-GO" id="Q7Z589">
    <property type="GO annotations" value="1 GO annotation based on evolutionary models"/>
</dbReference>
<dbReference type="PhylomeDB" id="Q7Z589"/>
<dbReference type="TreeFam" id="TF332401"/>
<dbReference type="PathwayCommons" id="Q7Z589"/>
<dbReference type="SignaLink" id="Q7Z589"/>
<dbReference type="SIGNOR" id="Q7Z589"/>
<dbReference type="BioGRID-ORCS" id="56946">
    <property type="hits" value="47 hits in 1131 CRISPR screens"/>
</dbReference>
<dbReference type="ChiTaRS" id="EMSY">
    <property type="organism name" value="human"/>
</dbReference>
<dbReference type="EvolutionaryTrace" id="Q7Z589"/>
<dbReference type="GeneWiki" id="C11orf30"/>
<dbReference type="GenomeRNAi" id="56946"/>
<dbReference type="Pharos" id="Q7Z589">
    <property type="development level" value="Tbio"/>
</dbReference>
<dbReference type="PRO" id="PR:Q7Z589"/>
<dbReference type="Proteomes" id="UP000005640">
    <property type="component" value="Chromosome 11"/>
</dbReference>
<dbReference type="RNAct" id="Q7Z589">
    <property type="molecule type" value="protein"/>
</dbReference>
<dbReference type="Bgee" id="ENSG00000158636">
    <property type="expression patterns" value="Expressed in ventricular zone and 176 other cell types or tissues"/>
</dbReference>
<dbReference type="ExpressionAtlas" id="Q7Z589">
    <property type="expression patterns" value="baseline and differential"/>
</dbReference>
<dbReference type="GO" id="GO:0005654">
    <property type="term" value="C:nucleoplasm"/>
    <property type="evidence" value="ECO:0000314"/>
    <property type="project" value="HPA"/>
</dbReference>
<dbReference type="GO" id="GO:0042802">
    <property type="term" value="F:identical protein binding"/>
    <property type="evidence" value="ECO:0007669"/>
    <property type="project" value="Ensembl"/>
</dbReference>
<dbReference type="GO" id="GO:0006325">
    <property type="term" value="P:chromatin organization"/>
    <property type="evidence" value="ECO:0007669"/>
    <property type="project" value="UniProtKB-KW"/>
</dbReference>
<dbReference type="GO" id="GO:0006281">
    <property type="term" value="P:DNA repair"/>
    <property type="evidence" value="ECO:0007669"/>
    <property type="project" value="UniProtKB-KW"/>
</dbReference>
<dbReference type="GO" id="GO:0006355">
    <property type="term" value="P:regulation of DNA-templated transcription"/>
    <property type="evidence" value="ECO:0007669"/>
    <property type="project" value="InterPro"/>
</dbReference>
<dbReference type="FunFam" id="1.10.1240.40:FF:000001">
    <property type="entry name" value="BRCA2-interacting transcriptional repressor EMSY isoform X1"/>
    <property type="match status" value="1"/>
</dbReference>
<dbReference type="Gene3D" id="1.10.1240.40">
    <property type="entry name" value="ENT domain"/>
    <property type="match status" value="1"/>
</dbReference>
<dbReference type="IDEAL" id="IID00281"/>
<dbReference type="InterPro" id="IPR033482">
    <property type="entry name" value="EMSY"/>
</dbReference>
<dbReference type="InterPro" id="IPR005491">
    <property type="entry name" value="ENT_dom"/>
</dbReference>
<dbReference type="InterPro" id="IPR036142">
    <property type="entry name" value="ENT_dom-like_sf"/>
</dbReference>
<dbReference type="PANTHER" id="PTHR16500">
    <property type="entry name" value="BRCA2-INTERACTING TRANSCRIPTIONAL REPRESSOR EMSY"/>
    <property type="match status" value="1"/>
</dbReference>
<dbReference type="PANTHER" id="PTHR16500:SF3">
    <property type="entry name" value="BRCA2-INTERACTING TRANSCRIPTIONAL REPRESSOR EMSY"/>
    <property type="match status" value="1"/>
</dbReference>
<dbReference type="Pfam" id="PF03735">
    <property type="entry name" value="ENT"/>
    <property type="match status" value="1"/>
</dbReference>
<dbReference type="SMART" id="SM01191">
    <property type="entry name" value="ENT"/>
    <property type="match status" value="1"/>
</dbReference>
<dbReference type="SUPFAM" id="SSF158639">
    <property type="entry name" value="ENT-like"/>
    <property type="match status" value="1"/>
</dbReference>
<dbReference type="PROSITE" id="PS51138">
    <property type="entry name" value="ENT"/>
    <property type="match status" value="1"/>
</dbReference>
<sequence length="1322" mass="141468">MPVVWPTLLDLSRDECKRILRKLELEAYAGVISALRAQGDLTKEKKDLLGELSKVLSISTERHRAEVRRAVNDERLTTIAHNMSGPNSSSEWSIEGRRLVPLMPRLVPQTAFTVTANAVANAAIQHNASLPVPAETGSKEVVCYSYTSTTSTPTSTPVPSGSIATVKSPRPASPASNVVVLPSGSTVYVKSVSCSDEDEKPRKRRRTNSSSSSPVVLKEVPKAVVPVSKTITVPVSGSPKMSNIMQSIANSLPPHMSPVKITFTKPSTQTTNTTTQKVIIVTTSPSSTFVPNILSKSHNYAAVTKLVPTSVIASTTQKPPVVITASQSSLVSNSSSGSSSSTPSPIPNTVAVTAVVSSTPSVVMSTVAQGVSTSAIKMASTRLPSPKSLVSAPTQILAQFPKQHQQSPKQQLYQVQQQTQQQVAQPSPVSHQQQPQQSPLPPGIKPTIQIKQESGVKIITQQVQPSKILPKPVTATLPTSSNSPIMVVSSNGAIMTTKLVTTPTGTQATYTRPTVSPSIGRMAATPGAATYVKTTSGSIITVVPKSLATLGGKIISSNIVSGTTTKITTIPMTSKPNVIVVQKTTGKGTTIQGLPGKNVVTTLLNAGGEKTIQTVPTGAKPAILTATRPITKMIVTQPKGIGSTVQPAAKIIPTKIVYGQQGKTQVLIKPKPVTFQATVVSEQTRQLVTETLQQASRVAEAGNSSIQEGKEEPQNYTDSSSSSTESSQSSQDSQPVVHVIASRRQDWSEHEIAMETSPTIIYQDVSSESQSATSTIKALLELQQTTVKEKLESKPRQPTIDLSQMAVPIQMTQEKRHSPESPSIAVVESELVAEYITTERTDEGTEVAFPLLVSHRSQPQQPSQPQRTLLQHVAQSQTATQTSVVVKSIPASSPGAITHIMQQALSSHTAFTKHSEELGTEEGEVEEMDTLDPQTGLFYRSALTQSQSAKQQKLSQPPLEQTQLQVKTLQCFQTKQKQTIHLQADQLQHKLPQMPQLSIRHQKLTPLQQEQAQPKPDVQHTQHPMVAKDRQLPTLMAQPPQTVVQVLAVKTTQQLPKLQQAPNQPKIYVQPQTPQSQMSLPASSEKQTASQVEQPIITQGSSVTKITFEGRQPPTVTKITGGSSVPKLTSPVTSISPIQASEKTAVSDILKMSLMEAQIDTNVEHMIVDPPKKALATSMLTGEAGSLPSTHMVVAGMANSTPQQQKCRESCSSPSTVGSSLTTRKIDPPAVPATGQFMRIQNVGQKKAEESPAEIIIQAIPQYAIPCHSSSNVVVEPSGLLELNNFTSQQLDDEETAMEQDIDSSTEDGTEPSPSQSSAERS</sequence>
<reference key="1">
    <citation type="journal article" date="2003" name="Cell">
        <title>EMSY links the BRCA2 pathway to sporadic breast and ovarian cancer.</title>
        <authorList>
            <person name="Hughes-Davies L."/>
            <person name="Huntsman D."/>
            <person name="Ruas M."/>
            <person name="Fuks F."/>
            <person name="Bye J."/>
            <person name="Chin S.-F."/>
            <person name="Milner J."/>
            <person name="Brown L.A."/>
            <person name="Hsu F."/>
            <person name="Gilks B."/>
            <person name="Nielsen T."/>
            <person name="Schulzer M."/>
            <person name="Chia S."/>
            <person name="Ragaz J."/>
            <person name="Cahn A."/>
            <person name="Linger L."/>
            <person name="Ozdag H."/>
            <person name="Cattaneo E."/>
            <person name="Jordanova E.S."/>
            <person name="Schuuring E."/>
            <person name="Yu D.S."/>
            <person name="Venkitaraman A."/>
            <person name="Ponder B."/>
            <person name="Doherty A."/>
            <person name="Aparicio S."/>
            <person name="Bentley D."/>
            <person name="Theillet C."/>
            <person name="Ponting C.P."/>
            <person name="Caldas C."/>
            <person name="Kouzarides T."/>
        </authorList>
    </citation>
    <scope>NUCLEOTIDE SEQUENCE [MRNA] (ISOFORM 1)</scope>
    <scope>FUNCTION</scope>
    <scope>SUBCELLULAR LOCATION</scope>
    <scope>INVOLVEMENT IN CANCER</scope>
    <scope>INTERACTION WITH BRCA2; CBX1 AND ZMYND11</scope>
    <scope>MUTAGENESIS OF 100-VAL--LEU-102 AND LEU-106</scope>
</reference>
<reference key="2">
    <citation type="journal article" date="2006" name="Nature">
        <title>Human chromosome 11 DNA sequence and analysis including novel gene identification.</title>
        <authorList>
            <person name="Taylor T.D."/>
            <person name="Noguchi H."/>
            <person name="Totoki Y."/>
            <person name="Toyoda A."/>
            <person name="Kuroki Y."/>
            <person name="Dewar K."/>
            <person name="Lloyd C."/>
            <person name="Itoh T."/>
            <person name="Takeda T."/>
            <person name="Kim D.-W."/>
            <person name="She X."/>
            <person name="Barlow K.F."/>
            <person name="Bloom T."/>
            <person name="Bruford E."/>
            <person name="Chang J.L."/>
            <person name="Cuomo C.A."/>
            <person name="Eichler E."/>
            <person name="FitzGerald M.G."/>
            <person name="Jaffe D.B."/>
            <person name="LaButti K."/>
            <person name="Nicol R."/>
            <person name="Park H.-S."/>
            <person name="Seaman C."/>
            <person name="Sougnez C."/>
            <person name="Yang X."/>
            <person name="Zimmer A.R."/>
            <person name="Zody M.C."/>
            <person name="Birren B.W."/>
            <person name="Nusbaum C."/>
            <person name="Fujiyama A."/>
            <person name="Hattori M."/>
            <person name="Rogers J."/>
            <person name="Lander E.S."/>
            <person name="Sakaki Y."/>
        </authorList>
    </citation>
    <scope>NUCLEOTIDE SEQUENCE [LARGE SCALE GENOMIC DNA]</scope>
</reference>
<reference key="3">
    <citation type="submission" date="2005-07" db="EMBL/GenBank/DDBJ databases">
        <authorList>
            <person name="Mural R.J."/>
            <person name="Istrail S."/>
            <person name="Sutton G."/>
            <person name="Florea L."/>
            <person name="Halpern A.L."/>
            <person name="Mobarry C.M."/>
            <person name="Lippert R."/>
            <person name="Walenz B."/>
            <person name="Shatkay H."/>
            <person name="Dew I."/>
            <person name="Miller J.R."/>
            <person name="Flanigan M.J."/>
            <person name="Edwards N.J."/>
            <person name="Bolanos R."/>
            <person name="Fasulo D."/>
            <person name="Halldorsson B.V."/>
            <person name="Hannenhalli S."/>
            <person name="Turner R."/>
            <person name="Yooseph S."/>
            <person name="Lu F."/>
            <person name="Nusskern D.R."/>
            <person name="Shue B.C."/>
            <person name="Zheng X.H."/>
            <person name="Zhong F."/>
            <person name="Delcher A.L."/>
            <person name="Huson D.H."/>
            <person name="Kravitz S.A."/>
            <person name="Mouchard L."/>
            <person name="Reinert K."/>
            <person name="Remington K.A."/>
            <person name="Clark A.G."/>
            <person name="Waterman M.S."/>
            <person name="Eichler E.E."/>
            <person name="Adams M.D."/>
            <person name="Hunkapiller M.W."/>
            <person name="Myers E.W."/>
            <person name="Venter J.C."/>
        </authorList>
    </citation>
    <scope>NUCLEOTIDE SEQUENCE [LARGE SCALE GENOMIC DNA]</scope>
</reference>
<reference key="4">
    <citation type="journal article" date="2004" name="Genome Res.">
        <title>The status, quality, and expansion of the NIH full-length cDNA project: the Mammalian Gene Collection (MGC).</title>
        <authorList>
            <consortium name="The MGC Project Team"/>
        </authorList>
    </citation>
    <scope>NUCLEOTIDE SEQUENCE [LARGE SCALE MRNA] (ISOFORMS 3; 4; 5; 6 AND 7)</scope>
    <scope>NUCLEOTIDE SEQUENCE [LARGE SCALE MRNA] OF 1082-1322 (ISOFORM 1)</scope>
    <source>
        <tissue>Brain</tissue>
        <tissue>Testis</tissue>
        <tissue>Urinary bladder</tissue>
    </source>
</reference>
<reference key="5">
    <citation type="journal article" date="2004" name="Nat. Genet.">
        <title>Complete sequencing and characterization of 21,243 full-length human cDNAs.</title>
        <authorList>
            <person name="Ota T."/>
            <person name="Suzuki Y."/>
            <person name="Nishikawa T."/>
            <person name="Otsuki T."/>
            <person name="Sugiyama T."/>
            <person name="Irie R."/>
            <person name="Wakamatsu A."/>
            <person name="Hayashi K."/>
            <person name="Sato H."/>
            <person name="Nagai K."/>
            <person name="Kimura K."/>
            <person name="Makita H."/>
            <person name="Sekine M."/>
            <person name="Obayashi M."/>
            <person name="Nishi T."/>
            <person name="Shibahara T."/>
            <person name="Tanaka T."/>
            <person name="Ishii S."/>
            <person name="Yamamoto J."/>
            <person name="Saito K."/>
            <person name="Kawai Y."/>
            <person name="Isono Y."/>
            <person name="Nakamura Y."/>
            <person name="Nagahari K."/>
            <person name="Murakami K."/>
            <person name="Yasuda T."/>
            <person name="Iwayanagi T."/>
            <person name="Wagatsuma M."/>
            <person name="Shiratori A."/>
            <person name="Sudo H."/>
            <person name="Hosoiri T."/>
            <person name="Kaku Y."/>
            <person name="Kodaira H."/>
            <person name="Kondo H."/>
            <person name="Sugawara M."/>
            <person name="Takahashi M."/>
            <person name="Kanda K."/>
            <person name="Yokoi T."/>
            <person name="Furuya T."/>
            <person name="Kikkawa E."/>
            <person name="Omura Y."/>
            <person name="Abe K."/>
            <person name="Kamihara K."/>
            <person name="Katsuta N."/>
            <person name="Sato K."/>
            <person name="Tanikawa M."/>
            <person name="Yamazaki M."/>
            <person name="Ninomiya K."/>
            <person name="Ishibashi T."/>
            <person name="Yamashita H."/>
            <person name="Murakawa K."/>
            <person name="Fujimori K."/>
            <person name="Tanai H."/>
            <person name="Kimata M."/>
            <person name="Watanabe M."/>
            <person name="Hiraoka S."/>
            <person name="Chiba Y."/>
            <person name="Ishida S."/>
            <person name="Ono Y."/>
            <person name="Takiguchi S."/>
            <person name="Watanabe S."/>
            <person name="Yosida M."/>
            <person name="Hotuta T."/>
            <person name="Kusano J."/>
            <person name="Kanehori K."/>
            <person name="Takahashi-Fujii A."/>
            <person name="Hara H."/>
            <person name="Tanase T.-O."/>
            <person name="Nomura Y."/>
            <person name="Togiya S."/>
            <person name="Komai F."/>
            <person name="Hara R."/>
            <person name="Takeuchi K."/>
            <person name="Arita M."/>
            <person name="Imose N."/>
            <person name="Musashino K."/>
            <person name="Yuuki H."/>
            <person name="Oshima A."/>
            <person name="Sasaki N."/>
            <person name="Aotsuka S."/>
            <person name="Yoshikawa Y."/>
            <person name="Matsunawa H."/>
            <person name="Ichihara T."/>
            <person name="Shiohata N."/>
            <person name="Sano S."/>
            <person name="Moriya S."/>
            <person name="Momiyama H."/>
            <person name="Satoh N."/>
            <person name="Takami S."/>
            <person name="Terashima Y."/>
            <person name="Suzuki O."/>
            <person name="Nakagawa S."/>
            <person name="Senoh A."/>
            <person name="Mizoguchi H."/>
            <person name="Goto Y."/>
            <person name="Shimizu F."/>
            <person name="Wakebe H."/>
            <person name="Hishigaki H."/>
            <person name="Watanabe T."/>
            <person name="Sugiyama A."/>
            <person name="Takemoto M."/>
            <person name="Kawakami B."/>
            <person name="Yamazaki M."/>
            <person name="Watanabe K."/>
            <person name="Kumagai A."/>
            <person name="Itakura S."/>
            <person name="Fukuzumi Y."/>
            <person name="Fujimori Y."/>
            <person name="Komiyama M."/>
            <person name="Tashiro H."/>
            <person name="Tanigami A."/>
            <person name="Fujiwara T."/>
            <person name="Ono T."/>
            <person name="Yamada K."/>
            <person name="Fujii Y."/>
            <person name="Ozaki K."/>
            <person name="Hirao M."/>
            <person name="Ohmori Y."/>
            <person name="Kawabata A."/>
            <person name="Hikiji T."/>
            <person name="Kobatake N."/>
            <person name="Inagaki H."/>
            <person name="Ikema Y."/>
            <person name="Okamoto S."/>
            <person name="Okitani R."/>
            <person name="Kawakami T."/>
            <person name="Noguchi S."/>
            <person name="Itoh T."/>
            <person name="Shigeta K."/>
            <person name="Senba T."/>
            <person name="Matsumura K."/>
            <person name="Nakajima Y."/>
            <person name="Mizuno T."/>
            <person name="Morinaga M."/>
            <person name="Sasaki M."/>
            <person name="Togashi T."/>
            <person name="Oyama M."/>
            <person name="Hata H."/>
            <person name="Watanabe M."/>
            <person name="Komatsu T."/>
            <person name="Mizushima-Sugano J."/>
            <person name="Satoh T."/>
            <person name="Shirai Y."/>
            <person name="Takahashi Y."/>
            <person name="Nakagawa K."/>
            <person name="Okumura K."/>
            <person name="Nagase T."/>
            <person name="Nomura N."/>
            <person name="Kikuchi H."/>
            <person name="Masuho Y."/>
            <person name="Yamashita R."/>
            <person name="Nakai K."/>
            <person name="Yada T."/>
            <person name="Nakamura Y."/>
            <person name="Ohara O."/>
            <person name="Isogai T."/>
            <person name="Sugano S."/>
        </authorList>
    </citation>
    <scope>NUCLEOTIDE SEQUENCE [LARGE SCALE MRNA] OF 861-1322 (ISOFORM 1)</scope>
    <source>
        <tissue>Placenta</tissue>
    </source>
</reference>
<reference key="6">
    <citation type="submission" date="2001-12" db="EMBL/GenBank/DDBJ databases">
        <authorList>
            <person name="Guo J.H."/>
            <person name="Zan Q."/>
            <person name="Yu L."/>
        </authorList>
    </citation>
    <scope>NUCLEOTIDE SEQUENCE [LARGE SCALE MRNA] OF 861-1322 (ISOFORM 2)</scope>
    <source>
        <tissue>Brain</tissue>
    </source>
</reference>
<reference key="7">
    <citation type="submission" date="2000-01" db="EMBL/GenBank/DDBJ databases">
        <title>A novel gene expressed in human liver non-tumor tissues.</title>
        <authorList>
            <person name="Li Y."/>
            <person name="Wu T."/>
            <person name="Xu S."/>
            <person name="Ren S."/>
            <person name="Chen Z."/>
            <person name="Han Z."/>
        </authorList>
    </citation>
    <scope>NUCLEOTIDE SEQUENCE [LARGE SCALE MRNA] OF 1115-1322 (ISOFORM 1)</scope>
    <source>
        <tissue>Liver</tissue>
    </source>
</reference>
<reference key="8">
    <citation type="journal article" date="2006" name="Nat. Biotechnol.">
        <title>A probability-based approach for high-throughput protein phosphorylation analysis and site localization.</title>
        <authorList>
            <person name="Beausoleil S.A."/>
            <person name="Villen J."/>
            <person name="Gerber S.A."/>
            <person name="Rush J."/>
            <person name="Gygi S.P."/>
        </authorList>
    </citation>
    <scope>PHOSPHORYLATION [LARGE SCALE ANALYSIS] AT SER-1136</scope>
    <scope>IDENTIFICATION BY MASS SPECTROMETRY [LARGE SCALE ANALYSIS]</scope>
    <source>
        <tissue>Cervix carcinoma</tissue>
    </source>
</reference>
<reference key="9">
    <citation type="journal article" date="2008" name="Proc. Natl. Acad. Sci. U.S.A.">
        <title>A quantitative atlas of mitotic phosphorylation.</title>
        <authorList>
            <person name="Dephoure N."/>
            <person name="Zhou C."/>
            <person name="Villen J."/>
            <person name="Beausoleil S.A."/>
            <person name="Bakalarski C.E."/>
            <person name="Elledge S.J."/>
            <person name="Gygi S.P."/>
        </authorList>
    </citation>
    <scope>PHOSPHORYLATION [LARGE SCALE ANALYSIS] AT SER-209 AND SER-1136</scope>
    <scope>IDENTIFICATION BY MASS SPECTROMETRY [LARGE SCALE ANALYSIS]</scope>
    <source>
        <tissue>Cervix carcinoma</tissue>
    </source>
</reference>
<reference key="10">
    <citation type="journal article" date="2009" name="Anal. Chem.">
        <title>Lys-N and trypsin cover complementary parts of the phosphoproteome in a refined SCX-based approach.</title>
        <authorList>
            <person name="Gauci S."/>
            <person name="Helbig A.O."/>
            <person name="Slijper M."/>
            <person name="Krijgsveld J."/>
            <person name="Heck A.J."/>
            <person name="Mohammed S."/>
        </authorList>
    </citation>
    <scope>IDENTIFICATION BY MASS SPECTROMETRY [LARGE SCALE ANALYSIS]</scope>
</reference>
<reference key="11">
    <citation type="journal article" date="2009" name="J. Biol. Chem.">
        <title>Identification and characterization of a novel nuclear protein complex involved in nuclear hormone receptor-mediated gene regulation.</title>
        <authorList>
            <person name="Garapaty S."/>
            <person name="Xu C.F."/>
            <person name="Trojer P."/>
            <person name="Mahajan M.A."/>
            <person name="Neubert T.A."/>
            <person name="Samuels H.H."/>
        </authorList>
    </citation>
    <scope>FUNCTION</scope>
    <scope>IDENTIFICATION IN A NUCLEAR RECEPTOR HORMONE COMPLEX</scope>
    <scope>INTERACTION WITH ZNF335; CCAR2; ASH2L; RBBP5</scope>
</reference>
<reference key="12">
    <citation type="journal article" date="2009" name="Sci. Signal.">
        <title>Quantitative phosphoproteomic analysis of T cell receptor signaling reveals system-wide modulation of protein-protein interactions.</title>
        <authorList>
            <person name="Mayya V."/>
            <person name="Lundgren D.H."/>
            <person name="Hwang S.-I."/>
            <person name="Rezaul K."/>
            <person name="Wu L."/>
            <person name="Eng J.K."/>
            <person name="Rodionov V."/>
            <person name="Han D.K."/>
        </authorList>
    </citation>
    <scope>PHOSPHORYLATION [LARGE SCALE ANALYSIS] AT THR-207</scope>
    <scope>IDENTIFICATION BY MASS SPECTROMETRY [LARGE SCALE ANALYSIS]</scope>
    <source>
        <tissue>Leukemic T-cell</tissue>
    </source>
</reference>
<reference key="13">
    <citation type="journal article" date="2010" name="Sci. Signal.">
        <title>Extensive crosstalk between O-GlcNAcylation and phosphorylation regulates cytokinesis.</title>
        <authorList>
            <person name="Wang Z."/>
            <person name="Udeshi N.D."/>
            <person name="Slawson C."/>
            <person name="Compton P.D."/>
            <person name="Sakabe K."/>
            <person name="Cheung W.D."/>
            <person name="Shabanowitz J."/>
            <person name="Hunt D.F."/>
            <person name="Hart G.W."/>
        </authorList>
    </citation>
    <scope>GLYCOSYLATION AT SER-228; SER-236; THR-271; THR-501; THR-506; SER-557 AND THR-1120</scope>
</reference>
<reference key="14">
    <citation type="journal article" date="2010" name="Sci. Signal.">
        <title>Quantitative phosphoproteomics reveals widespread full phosphorylation site occupancy during mitosis.</title>
        <authorList>
            <person name="Olsen J.V."/>
            <person name="Vermeulen M."/>
            <person name="Santamaria A."/>
            <person name="Kumar C."/>
            <person name="Miller M.L."/>
            <person name="Jensen L.J."/>
            <person name="Gnad F."/>
            <person name="Cox J."/>
            <person name="Jensen T.S."/>
            <person name="Nigg E.A."/>
            <person name="Brunak S."/>
            <person name="Mann M."/>
        </authorList>
    </citation>
    <scope>PHOSPHORYLATION [LARGE SCALE ANALYSIS] AT SER-209 AND SER-1136</scope>
    <scope>IDENTIFICATION BY MASS SPECTROMETRY [LARGE SCALE ANALYSIS]</scope>
    <source>
        <tissue>Cervix carcinoma</tissue>
    </source>
</reference>
<reference key="15">
    <citation type="journal article" date="2011" name="Sci. Signal.">
        <title>System-wide temporal characterization of the proteome and phosphoproteome of human embryonic stem cell differentiation.</title>
        <authorList>
            <person name="Rigbolt K.T."/>
            <person name="Prokhorova T.A."/>
            <person name="Akimov V."/>
            <person name="Henningsen J."/>
            <person name="Johansen P.T."/>
            <person name="Kratchmarova I."/>
            <person name="Kassem M."/>
            <person name="Mann M."/>
            <person name="Olsen J.V."/>
            <person name="Blagoev B."/>
        </authorList>
    </citation>
    <scope>PHOSPHORYLATION [LARGE SCALE ANALYSIS] AT SER-209</scope>
    <scope>IDENTIFICATION BY MASS SPECTROMETRY [LARGE SCALE ANALYSIS]</scope>
</reference>
<reference key="16">
    <citation type="journal article" date="2013" name="J. Proteome Res.">
        <title>Toward a comprehensive characterization of a human cancer cell phosphoproteome.</title>
        <authorList>
            <person name="Zhou H."/>
            <person name="Di Palma S."/>
            <person name="Preisinger C."/>
            <person name="Peng M."/>
            <person name="Polat A.N."/>
            <person name="Heck A.J."/>
            <person name="Mohammed S."/>
        </authorList>
    </citation>
    <scope>PHOSPHORYLATION [LARGE SCALE ANALYSIS] AT THR-207; SER-209; SER-238 AND SER-1136</scope>
    <scope>IDENTIFICATION BY MASS SPECTROMETRY [LARGE SCALE ANALYSIS]</scope>
    <source>
        <tissue>Cervix carcinoma</tissue>
        <tissue>Erythroleukemia</tissue>
    </source>
</reference>
<reference key="17">
    <citation type="journal article" date="2014" name="J. Proteomics">
        <title>An enzyme assisted RP-RPLC approach for in-depth analysis of human liver phosphoproteome.</title>
        <authorList>
            <person name="Bian Y."/>
            <person name="Song C."/>
            <person name="Cheng K."/>
            <person name="Dong M."/>
            <person name="Wang F."/>
            <person name="Huang J."/>
            <person name="Sun D."/>
            <person name="Wang L."/>
            <person name="Ye M."/>
            <person name="Zou H."/>
        </authorList>
    </citation>
    <scope>IDENTIFICATION BY MASS SPECTROMETRY [LARGE SCALE ANALYSIS]</scope>
    <source>
        <tissue>Liver</tissue>
    </source>
</reference>
<reference key="18">
    <citation type="journal article" date="2005" name="EMBO Rep.">
        <title>Binding of EMSY to HP1beta: implications for recruitment of HP1beta and BS69.</title>
        <authorList>
            <person name="Ekblad C.M.S."/>
            <person name="Chavali G.B."/>
            <person name="Basu B.P."/>
            <person name="Freund S.M.V."/>
            <person name="Veprintsev D."/>
            <person name="Hughes-Davies L."/>
            <person name="Kouzarides T."/>
            <person name="Doherty A.J."/>
            <person name="Itzhaki L.S."/>
        </authorList>
    </citation>
    <scope>X-RAY CRYSTALLOGRAPHY (2.0 ANGSTROMS) OF 1-108</scope>
    <scope>INTERACTION WITH ZMYND11</scope>
</reference>
<reference key="19">
    <citation type="journal article" date="2005" name="J. Mol. Biol.">
        <title>Crystal structure of the ENT domain of human EMSY.</title>
        <authorList>
            <person name="Chavali G.B."/>
            <person name="Ekblad C.M."/>
            <person name="Basu B.P."/>
            <person name="Brissett N.C."/>
            <person name="Veprintsev D."/>
            <person name="Hughes-Davies L."/>
            <person name="Kouzarides T."/>
            <person name="Itzhaki L.S."/>
            <person name="Doherty A.J."/>
        </authorList>
    </citation>
    <scope>X-RAY CRYSTALLOGRAPHY (1.1 ANGSTROMS) OF 1-100</scope>
    <scope>SUBUNIT</scope>
</reference>
<reference key="20">
    <citation type="journal article" date="2006" name="Structure">
        <title>Crystal structure of the HP1-EMSY complex reveals an unusual mode of HP1 binding.</title>
        <authorList>
            <person name="Huang Y."/>
            <person name="Myers M.P."/>
            <person name="Xu R.-M."/>
        </authorList>
    </citation>
    <scope>X-RAY CRYSTALLOGRAPHY (1.8 ANGSTROMS) OF 9-139 IN COMPLEX WITH CBX1</scope>
</reference>
<accession>Q7Z589</accession>
<accession>B7ZKT8</accession>
<accession>B7ZKU0</accession>
<accession>B7ZKU2</accession>
<accession>Q17RM7</accession>
<accession>Q4G109</accession>
<accession>Q8NBU6</accession>
<accession>Q8TE50</accession>
<accession>Q9H8I9</accession>
<accession>Q9NRH0</accession>
<evidence type="ECO:0000250" key="1">
    <source>
        <dbReference type="UniProtKB" id="Q8BMB0"/>
    </source>
</evidence>
<evidence type="ECO:0000255" key="2">
    <source>
        <dbReference type="PROSITE-ProRule" id="PRU00476"/>
    </source>
</evidence>
<evidence type="ECO:0000256" key="3">
    <source>
        <dbReference type="SAM" id="MobiDB-lite"/>
    </source>
</evidence>
<evidence type="ECO:0000269" key="4">
    <source>
    </source>
</evidence>
<evidence type="ECO:0000269" key="5">
    <source>
    </source>
</evidence>
<evidence type="ECO:0000269" key="6">
    <source>
    </source>
</evidence>
<evidence type="ECO:0000269" key="7">
    <source>
    </source>
</evidence>
<evidence type="ECO:0000269" key="8">
    <source>
    </source>
</evidence>
<evidence type="ECO:0000269" key="9">
    <source>
    </source>
</evidence>
<evidence type="ECO:0000303" key="10">
    <source>
    </source>
</evidence>
<evidence type="ECO:0000303" key="11">
    <source ref="6"/>
</evidence>
<evidence type="ECO:0000305" key="12"/>
<evidence type="ECO:0000312" key="13">
    <source>
        <dbReference type="HGNC" id="HGNC:18071"/>
    </source>
</evidence>
<evidence type="ECO:0007744" key="14">
    <source>
    </source>
</evidence>
<evidence type="ECO:0007744" key="15">
    <source>
    </source>
</evidence>
<evidence type="ECO:0007744" key="16">
    <source>
    </source>
</evidence>
<evidence type="ECO:0007744" key="17">
    <source>
    </source>
</evidence>
<evidence type="ECO:0007744" key="18">
    <source>
    </source>
</evidence>
<evidence type="ECO:0007744" key="19">
    <source>
    </source>
</evidence>
<evidence type="ECO:0007829" key="20">
    <source>
        <dbReference type="PDB" id="1UZ3"/>
    </source>
</evidence>
<evidence type="ECO:0007829" key="21">
    <source>
        <dbReference type="PDB" id="2FMM"/>
    </source>
</evidence>
<comment type="function">
    <text evidence="4 8">Regulator which is able to repress transcription, possibly via its interaction with a multiprotein chromatin remodeling complex that modifies the chromatin (PubMed:14651845). Its interaction with BRCA2 suggests that it may play a central role in the DNA repair function of BRCA2 (PubMed:14651845). Mediates ligand-dependent transcriptional activation by nuclear hormone receptors (PubMed:19131338).</text>
</comment>
<comment type="subunit">
    <text evidence="4 5 6 7 8">Homodimer (PubMed:15978617). Interacts with the transactivation domain of BRCA2 (PubMed:14651845). Interacts with CBX1 (via chromoshadow domain) (PubMed:14651845, PubMed:16615912). Interacts with ZMYND11 (PubMed:14651845, PubMed:15947784). Does not interact with CBX3 or CBX5 (PubMed:14651845). Component of a nuclear receptor-mediated transcription complex composed of at least ZNF335, CCAR2 and EMSY; the complex stimulates the transcription of nuclear receptor target genes such as SOX9 and HOXA1 (PubMed:19131338). Within the complex interacts with CCAR2 and ZNF335 (PubMed:19131338). Components of this complex may associate with components of a histone methylation complex to form a complex at least composed of ZNF335, HCFC1, CCAR2, EMSY, MKI67, RBBP5, ASH2L and WDR5 (PubMed:19131338). Within this complex, interacts with ASH2L and RBBP5 (PubMed:19131338).</text>
</comment>
<comment type="interaction">
    <interactant intactId="EBI-6598631">
        <id>Q7Z589</id>
    </interactant>
    <interactant intactId="EBI-78129">
        <id>P83916</id>
        <label>CBX1</label>
    </interactant>
    <organismsDiffer>false</organismsDiffer>
    <experiments>3</experiments>
</comment>
<comment type="interaction">
    <interactant intactId="EBI-6598631">
        <id>Q7Z589</id>
    </interactant>
    <interactant intactId="EBI-10173632">
        <id>P35638-2</id>
        <label>DDIT3</label>
    </interactant>
    <organismsDiffer>false</organismsDiffer>
    <experiments>3</experiments>
</comment>
<comment type="interaction">
    <interactant intactId="EBI-6598631">
        <id>Q7Z589</id>
    </interactant>
    <interactant intactId="EBI-745608">
        <id>O15015</id>
        <label>ZNF646</label>
    </interactant>
    <organismsDiffer>false</organismsDiffer>
    <experiments>3</experiments>
</comment>
<comment type="interaction">
    <interactant intactId="EBI-11989522">
        <id>Q7Z589-5</id>
    </interactant>
    <interactant intactId="EBI-4401674">
        <id>Q96BJ3</id>
        <label>AIDA</label>
    </interactant>
    <organismsDiffer>false</organismsDiffer>
    <experiments>3</experiments>
</comment>
<comment type="interaction">
    <interactant intactId="EBI-11989522">
        <id>Q7Z589-5</id>
    </interactant>
    <interactant intactId="EBI-12357161">
        <id>Q5SYC1</id>
        <label>CLVS2</label>
    </interactant>
    <organismsDiffer>false</organismsDiffer>
    <experiments>3</experiments>
</comment>
<comment type="interaction">
    <interactant intactId="EBI-11989522">
        <id>Q7Z589-5</id>
    </interactant>
    <interactant intactId="EBI-742651">
        <id>P35638</id>
        <label>DDIT3</label>
    </interactant>
    <organismsDiffer>false</organismsDiffer>
    <experiments>3</experiments>
</comment>
<comment type="interaction">
    <interactant intactId="EBI-11989522">
        <id>Q7Z589-5</id>
    </interactant>
    <interactant intactId="EBI-11988027">
        <id>Q9NRI5-2</id>
        <label>DISC1</label>
    </interactant>
    <organismsDiffer>false</organismsDiffer>
    <experiments>3</experiments>
</comment>
<comment type="interaction">
    <interactant intactId="EBI-11989522">
        <id>Q7Z589-5</id>
    </interactant>
    <interactant intactId="EBI-2515857">
        <id>O43681</id>
        <label>GET3</label>
    </interactant>
    <organismsDiffer>false</organismsDiffer>
    <experiments>3</experiments>
</comment>
<comment type="interaction">
    <interactant intactId="EBI-11989522">
        <id>Q7Z589-5</id>
    </interactant>
    <interactant intactId="EBI-10694501">
        <id>Q8N485</id>
        <label>LIX1</label>
    </interactant>
    <organismsDiffer>false</organismsDiffer>
    <experiments>3</experiments>
</comment>
<comment type="interaction">
    <interactant intactId="EBI-11989522">
        <id>Q7Z589-5</id>
    </interactant>
    <interactant intactId="EBI-359352">
        <id>P25786</id>
        <label>PSMA1</label>
    </interactant>
    <organismsDiffer>false</organismsDiffer>
    <experiments>3</experiments>
</comment>
<comment type="subcellular location">
    <subcellularLocation>
        <location evidence="4">Nucleus</location>
    </subcellularLocation>
    <text>Localizes to DNA damage markers in irradiated cells, suggesting that it participates in DNA repair process.</text>
</comment>
<comment type="alternative products">
    <event type="alternative splicing"/>
    <isoform>
        <id>Q7Z589-1</id>
        <name>1</name>
        <sequence type="displayed"/>
    </isoform>
    <isoform>
        <id>Q7Z589-2</id>
        <name>2</name>
        <sequence type="described" ref="VSP_010431"/>
    </isoform>
    <isoform>
        <id>Q7Z589-3</id>
        <name>3</name>
        <sequence type="described" ref="VSP_020774 VSP_020775"/>
    </isoform>
    <isoform>
        <id>Q7Z589-4</id>
        <name>4</name>
        <sequence type="described" ref="VSP_054139 VSP_054140 VSP_054143"/>
    </isoform>
    <isoform>
        <id>Q7Z589-5</id>
        <name>5</name>
        <sequence type="described" ref="VSP_054140"/>
    </isoform>
    <isoform>
        <id>Q7Z589-6</id>
        <name>6</name>
        <sequence type="described" ref="VSP_054139 VSP_054141 VSP_054142"/>
    </isoform>
    <isoform>
        <id>Q7Z589-7</id>
        <name>7</name>
        <sequence type="described" ref="VSP_054139 VSP_054140"/>
    </isoform>
</comment>
<comment type="PTM">
    <text evidence="9">O-glycosylated during cytokinesis at sites identical or close to phosphorylation sites, this interferes with the phosphorylation status.</text>
</comment>
<comment type="miscellaneous">
    <text>Defects in EMSY may be a cause of sporadic breast cancer and higher-grade ovarian cancers. Overexpressed through amplification almost exclusively in sporadic breast cancer (13%) and higher-grade ovarian cancer (17%). Amplification is associated with worse survival, particularly in node-negative breast cancer, suggesting that it may be of prognostic value.</text>
</comment>
<comment type="miscellaneous">
    <text>Was named EMSY by PubMed:14651845 because the protein sequence contains the word 'SISTER', after the first author's sister, who is a breast cancer nurse.</text>
</comment>
<comment type="sequence caution" evidence="12">
    <conflict type="erroneous initiation">
        <sequence resource="EMBL-CDS" id="AAF86947"/>
    </conflict>
</comment>
<comment type="sequence caution" evidence="12">
    <conflict type="erroneous initiation">
        <sequence resource="EMBL-CDS" id="AAH29375"/>
    </conflict>
</comment>
<comment type="sequence caution" evidence="12">
    <conflict type="erroneous initiation">
        <sequence resource="EMBL-CDS" id="AAL65260"/>
    </conflict>
</comment>
<comment type="sequence caution" evidence="12">
    <conflict type="erroneous initiation">
        <sequence resource="EMBL-CDS" id="BAB14627"/>
    </conflict>
</comment>
<comment type="online information" name="Atlas of Genetics and Cytogenetics in Oncology and Haematology">
    <link uri="https://atlasgeneticsoncology.org/gene/173/C11ORF30"/>
</comment>
<name>EMSY_HUMAN</name>
<keyword id="KW-0002">3D-structure</keyword>
<keyword id="KW-0025">Alternative splicing</keyword>
<keyword id="KW-0156">Chromatin regulator</keyword>
<keyword id="KW-0227">DNA damage</keyword>
<keyword id="KW-0234">DNA repair</keyword>
<keyword id="KW-0325">Glycoprotein</keyword>
<keyword id="KW-0539">Nucleus</keyword>
<keyword id="KW-0597">Phosphoprotein</keyword>
<keyword id="KW-1267">Proteomics identification</keyword>
<keyword id="KW-1185">Reference proteome</keyword>
<keyword id="KW-0678">Repressor</keyword>
<keyword id="KW-0804">Transcription</keyword>
<keyword id="KW-0805">Transcription regulation</keyword>
<protein>
    <recommendedName>
        <fullName evidence="13">BRCA2-interacting transcriptional repressor EMSY</fullName>
    </recommendedName>
</protein>
<feature type="chain" id="PRO_0000086968" description="BRCA2-interacting transcriptional repressor EMSY">
    <location>
        <begin position="1"/>
        <end position="1322"/>
    </location>
</feature>
<feature type="domain" description="ENT" evidence="2">
    <location>
        <begin position="16"/>
        <end position="100"/>
    </location>
</feature>
<feature type="region of interest" description="Interaction with BRCA2" evidence="4">
    <location>
        <begin position="1"/>
        <end position="478"/>
    </location>
</feature>
<feature type="region of interest" description="Interaction with ZMYND11">
    <location>
        <begin position="104"/>
        <end position="108"/>
    </location>
</feature>
<feature type="region of interest" description="Disordered" evidence="3">
    <location>
        <begin position="148"/>
        <end position="178"/>
    </location>
</feature>
<feature type="region of interest" description="Disordered" evidence="3">
    <location>
        <begin position="192"/>
        <end position="215"/>
    </location>
</feature>
<feature type="region of interest" description="Disordered" evidence="3">
    <location>
        <begin position="417"/>
        <end position="444"/>
    </location>
</feature>
<feature type="region of interest" description="Disordered" evidence="3">
    <location>
        <begin position="698"/>
        <end position="736"/>
    </location>
</feature>
<feature type="region of interest" description="Disordered" evidence="3">
    <location>
        <begin position="1205"/>
        <end position="1231"/>
    </location>
</feature>
<feature type="region of interest" description="Disordered" evidence="3">
    <location>
        <begin position="1290"/>
        <end position="1322"/>
    </location>
</feature>
<feature type="compositionally biased region" description="Low complexity" evidence="3">
    <location>
        <begin position="148"/>
        <end position="162"/>
    </location>
</feature>
<feature type="compositionally biased region" description="Low complexity" evidence="3">
    <location>
        <begin position="417"/>
        <end position="437"/>
    </location>
</feature>
<feature type="compositionally biased region" description="Polar residues" evidence="3">
    <location>
        <begin position="698"/>
        <end position="707"/>
    </location>
</feature>
<feature type="compositionally biased region" description="Low complexity" evidence="3">
    <location>
        <begin position="717"/>
        <end position="734"/>
    </location>
</feature>
<feature type="compositionally biased region" description="Polar residues" evidence="3">
    <location>
        <begin position="1205"/>
        <end position="1223"/>
    </location>
</feature>
<feature type="compositionally biased region" description="Acidic residues" evidence="3">
    <location>
        <begin position="1291"/>
        <end position="1310"/>
    </location>
</feature>
<feature type="compositionally biased region" description="Polar residues" evidence="3">
    <location>
        <begin position="1312"/>
        <end position="1322"/>
    </location>
</feature>
<feature type="modified residue" description="Phosphothreonine" evidence="16 19">
    <location>
        <position position="207"/>
    </location>
</feature>
<feature type="modified residue" description="Phosphoserine" evidence="15 17 18 19">
    <location>
        <position position="209"/>
    </location>
</feature>
<feature type="modified residue" description="Phosphoserine" evidence="1">
    <location>
        <position position="213"/>
    </location>
</feature>
<feature type="modified residue" description="Phosphoserine" evidence="19">
    <location>
        <position position="238"/>
    </location>
</feature>
<feature type="modified residue" description="Phosphoserine" evidence="1">
    <location>
        <position position="818"/>
    </location>
</feature>
<feature type="modified residue" description="Phosphoserine" evidence="1">
    <location>
        <position position="821"/>
    </location>
</feature>
<feature type="modified residue" description="Phosphoserine" evidence="14 15 17 19">
    <location>
        <position position="1136"/>
    </location>
</feature>
<feature type="glycosylation site" description="O-linked (GlcNAc) serine" evidence="9">
    <location>
        <position position="228"/>
    </location>
</feature>
<feature type="glycosylation site" description="O-linked (GlcNAc) serine" evidence="9">
    <location>
        <position position="236"/>
    </location>
</feature>
<feature type="glycosylation site" description="O-linked (GlcNAc) threonine" evidence="9">
    <location>
        <position position="271"/>
    </location>
</feature>
<feature type="glycosylation site" description="O-linked (GlcNAc) threonine" evidence="9">
    <location>
        <position position="501"/>
    </location>
</feature>
<feature type="glycosylation site" description="O-linked (GlcNAc) threonine" evidence="9">
    <location>
        <position position="506"/>
    </location>
</feature>
<feature type="glycosylation site" description="O-linked (GlcNAc) serine" evidence="9">
    <location>
        <position position="557"/>
    </location>
</feature>
<feature type="glycosylation site" description="O-linked (GlcNAc) threonine" evidence="9">
    <location>
        <position position="1120"/>
    </location>
</feature>
<feature type="splice variant" id="VSP_020774" description="In isoform 3." evidence="10">
    <original>N</original>
    <variation>K</variation>
    <location>
        <position position="82"/>
    </location>
</feature>
<feature type="splice variant" id="VSP_054139" description="In isoform 4, isoform 6 and isoform 7." evidence="10">
    <original>N</original>
    <variation>KMNLSLYLGERPSYS</variation>
    <location>
        <position position="82"/>
    </location>
</feature>
<feature type="splice variant" id="VSP_020775" description="In isoform 3." evidence="10">
    <location>
        <begin position="83"/>
        <end position="1322"/>
    </location>
</feature>
<feature type="splice variant" id="VSP_054140" description="In isoform 4, isoform 5 and isoform 7." evidence="10">
    <original>E</original>
    <variation>EV</variation>
    <location>
        <position position="140"/>
    </location>
</feature>
<feature type="splice variant" id="VSP_054141" description="In isoform 6." evidence="10">
    <original>SQPVVHVIASRRQDW</original>
    <variation>AVVISGEISSPPLFS</variation>
    <location>
        <begin position="733"/>
        <end position="747"/>
    </location>
</feature>
<feature type="splice variant" id="VSP_054142" description="In isoform 6." evidence="10">
    <location>
        <begin position="748"/>
        <end position="852"/>
    </location>
</feature>
<feature type="splice variant" id="VSP_054143" description="In isoform 4." evidence="10">
    <location>
        <begin position="839"/>
        <end position="852"/>
    </location>
</feature>
<feature type="splice variant" id="VSP_010431" description="In isoform 2." evidence="11">
    <location>
        <begin position="1091"/>
        <end position="1257"/>
    </location>
</feature>
<feature type="mutagenesis site" description="Abolishes interaction with CBX1." evidence="4">
    <original>VPL</original>
    <variation>APA</variation>
    <location>
        <begin position="100"/>
        <end position="102"/>
    </location>
</feature>
<feature type="mutagenesis site" description="Abolishes interaction with ZMYND11." evidence="4">
    <original>L</original>
    <variation>A</variation>
    <location>
        <position position="106"/>
    </location>
</feature>
<feature type="helix" evidence="20">
    <location>
        <begin position="7"/>
        <end position="9"/>
    </location>
</feature>
<feature type="helix" evidence="20">
    <location>
        <begin position="13"/>
        <end position="38"/>
    </location>
</feature>
<feature type="helix" evidence="20">
    <location>
        <begin position="43"/>
        <end position="55"/>
    </location>
</feature>
<feature type="helix" evidence="20">
    <location>
        <begin position="60"/>
        <end position="71"/>
    </location>
</feature>
<feature type="helix" evidence="20">
    <location>
        <begin position="74"/>
        <end position="84"/>
    </location>
</feature>
<feature type="helix" evidence="20">
    <location>
        <begin position="90"/>
        <end position="97"/>
    </location>
</feature>
<feature type="strand" evidence="21">
    <location>
        <begin position="98"/>
        <end position="103"/>
    </location>
</feature>
<feature type="helix" evidence="21">
    <location>
        <begin position="108"/>
        <end position="110"/>
    </location>
</feature>
<feature type="strand" evidence="21">
    <location>
        <begin position="112"/>
        <end position="116"/>
    </location>
</feature>
<feature type="strand" evidence="21">
    <location>
        <begin position="122"/>
        <end position="124"/>
    </location>
</feature>
<proteinExistence type="evidence at protein level"/>
<organism>
    <name type="scientific">Homo sapiens</name>
    <name type="common">Human</name>
    <dbReference type="NCBI Taxonomy" id="9606"/>
    <lineage>
        <taxon>Eukaryota</taxon>
        <taxon>Metazoa</taxon>
        <taxon>Chordata</taxon>
        <taxon>Craniata</taxon>
        <taxon>Vertebrata</taxon>
        <taxon>Euteleostomi</taxon>
        <taxon>Mammalia</taxon>
        <taxon>Eutheria</taxon>
        <taxon>Euarchontoglires</taxon>
        <taxon>Primates</taxon>
        <taxon>Haplorrhini</taxon>
        <taxon>Catarrhini</taxon>
        <taxon>Hominidae</taxon>
        <taxon>Homo</taxon>
    </lineage>
</organism>